<gene>
    <name evidence="1" type="primary">matK</name>
</gene>
<dbReference type="EMBL" id="Z70190">
    <property type="protein sequence ID" value="CAA94079.1"/>
    <property type="molecule type" value="Genomic_DNA"/>
</dbReference>
<dbReference type="GO" id="GO:0009507">
    <property type="term" value="C:chloroplast"/>
    <property type="evidence" value="ECO:0007669"/>
    <property type="project" value="UniProtKB-SubCell"/>
</dbReference>
<dbReference type="GO" id="GO:0003723">
    <property type="term" value="F:RNA binding"/>
    <property type="evidence" value="ECO:0007669"/>
    <property type="project" value="UniProtKB-KW"/>
</dbReference>
<dbReference type="GO" id="GO:0006397">
    <property type="term" value="P:mRNA processing"/>
    <property type="evidence" value="ECO:0007669"/>
    <property type="project" value="UniProtKB-KW"/>
</dbReference>
<dbReference type="GO" id="GO:0008380">
    <property type="term" value="P:RNA splicing"/>
    <property type="evidence" value="ECO:0007669"/>
    <property type="project" value="UniProtKB-UniRule"/>
</dbReference>
<dbReference type="GO" id="GO:0008033">
    <property type="term" value="P:tRNA processing"/>
    <property type="evidence" value="ECO:0007669"/>
    <property type="project" value="UniProtKB-KW"/>
</dbReference>
<dbReference type="HAMAP" id="MF_01390">
    <property type="entry name" value="MatK"/>
    <property type="match status" value="1"/>
</dbReference>
<dbReference type="InterPro" id="IPR024937">
    <property type="entry name" value="Domain_X"/>
</dbReference>
<dbReference type="InterPro" id="IPR002866">
    <property type="entry name" value="Maturase_MatK"/>
</dbReference>
<dbReference type="InterPro" id="IPR024942">
    <property type="entry name" value="Maturase_MatK_N"/>
</dbReference>
<dbReference type="PANTHER" id="PTHR34811">
    <property type="entry name" value="MATURASE K"/>
    <property type="match status" value="1"/>
</dbReference>
<dbReference type="PANTHER" id="PTHR34811:SF1">
    <property type="entry name" value="MATURASE K"/>
    <property type="match status" value="1"/>
</dbReference>
<dbReference type="Pfam" id="PF01348">
    <property type="entry name" value="Intron_maturas2"/>
    <property type="match status" value="1"/>
</dbReference>
<dbReference type="Pfam" id="PF01824">
    <property type="entry name" value="MatK_N"/>
    <property type="match status" value="1"/>
</dbReference>
<organism>
    <name type="scientific">Allamanda cathartica</name>
    <name type="common">Yellow allamanda</name>
    <dbReference type="NCBI Taxonomy" id="52818"/>
    <lineage>
        <taxon>Eukaryota</taxon>
        <taxon>Viridiplantae</taxon>
        <taxon>Streptophyta</taxon>
        <taxon>Embryophyta</taxon>
        <taxon>Tracheophyta</taxon>
        <taxon>Spermatophyta</taxon>
        <taxon>Magnoliopsida</taxon>
        <taxon>eudicotyledons</taxon>
        <taxon>Gunneridae</taxon>
        <taxon>Pentapetalae</taxon>
        <taxon>asterids</taxon>
        <taxon>lamiids</taxon>
        <taxon>Gentianales</taxon>
        <taxon>Apocynaceae</taxon>
        <taxon>Rauvolfioideae</taxon>
        <taxon>Plumerieae</taxon>
        <taxon>Allamandinae</taxon>
        <taxon>Allamanda</taxon>
    </lineage>
</organism>
<evidence type="ECO:0000255" key="1">
    <source>
        <dbReference type="HAMAP-Rule" id="MF_01390"/>
    </source>
</evidence>
<protein>
    <recommendedName>
        <fullName evidence="1">Maturase K</fullName>
    </recommendedName>
    <alternativeName>
        <fullName evidence="1">Intron maturase</fullName>
    </alternativeName>
</protein>
<keyword id="KW-0150">Chloroplast</keyword>
<keyword id="KW-0507">mRNA processing</keyword>
<keyword id="KW-0934">Plastid</keyword>
<keyword id="KW-0694">RNA-binding</keyword>
<keyword id="KW-0819">tRNA processing</keyword>
<feature type="chain" id="PRO_0000143220" description="Maturase K">
    <location>
        <begin position="1"/>
        <end position="505"/>
    </location>
</feature>
<geneLocation type="chloroplast"/>
<accession>O19816</accession>
<sequence>MEAIQRYLQFDRSQQLSFLYPLIFQEYIYAFARDHSLNRAILLENPGYDNKSSFLIVKRLITRMYQQNHFIISANDSSQNPFFGRNKNLYSKMISEGFSFIIEIPLSTRLISSEELKGILKSPNLRSIHSIFPFLEDNFSHFHFVLDILIPHPVHLEILFQTLRYWLKDAPSLHLLRXXXXXXXXXXXXXXXXXXXXXXXXXXXXXXXXXXXXXXXXXXXXXXXXXXXXXXXXXXXXXXXXXXXXXXXXXXXXXXXXXXXXXXXXXXXXXXXXXXXXXXXXXXXXXXXXXXXXXXXXXXXXXXXXXXXXXLWFHSERVYIKQLSNHSLDFMGYFSIVRLNPSMVRSQMLENXFLINNAIKKFDTLVPMIPLIGSLSKAKFCNLFGHPISKSARTDLSDSDIMDRFGRICRNLSHYHSGSSKKKSLYRIKYILRLSCAKTLARKHKSTVRAFLKRLGSEFFEEFLMSEEETLCLTFPRVSSPFWGVYGSRIWYLDITCINDLANQQ</sequence>
<proteinExistence type="inferred from homology"/>
<reference key="1">
    <citation type="journal article" date="1996" name="Opera Bot. Belg.">
        <title>A phylogenetic analysis of Apocynaceae s.str. and some related taxa in Gentianales: a multidiciplinary approach.</title>
        <authorList>
            <person name="Endress M.E."/>
            <person name="Sennblad B."/>
            <person name="Nilsson S."/>
            <person name="Civeyrel L."/>
            <person name="Chase M.W."/>
            <person name="Huysmans S."/>
            <person name="Grafstroem E."/>
            <person name="Bremer B."/>
        </authorList>
    </citation>
    <scope>NUCLEOTIDE SEQUENCE [GENOMIC DNA]</scope>
</reference>
<comment type="function">
    <text evidence="1">Usually encoded in the trnK tRNA gene intron. Probably assists in splicing its own and other chloroplast group II introns.</text>
</comment>
<comment type="subcellular location">
    <subcellularLocation>
        <location>Plastid</location>
        <location>Chloroplast</location>
    </subcellularLocation>
</comment>
<comment type="similarity">
    <text evidence="1">Belongs to the intron maturase 2 family. MatK subfamily.</text>
</comment>
<name>MATK_ALLCA</name>